<name>Y1444_NEIMB</name>
<proteinExistence type="inferred from homology"/>
<comment type="function">
    <text evidence="1">Binds to DNA and alters its conformation. May be involved in regulation of gene expression, nucleoid organization and DNA protection.</text>
</comment>
<comment type="subunit">
    <text evidence="1">Homodimer.</text>
</comment>
<comment type="subcellular location">
    <subcellularLocation>
        <location evidence="1">Cytoplasm</location>
        <location evidence="1">Nucleoid</location>
    </subcellularLocation>
</comment>
<comment type="similarity">
    <text evidence="1">Belongs to the YbaB/EbfC family.</text>
</comment>
<sequence length="111" mass="11925">MFGKAGLGGLMKQAQQMQENMKKAQAKLAETEIEGEAGNGLVKITMTCAHEVRKIDISPDLIQEAADDKEMLEDLILAALKSARGKAEETANKTMGAFTQGLPPGVGDFFR</sequence>
<dbReference type="EMBL" id="AE002098">
    <property type="protein sequence ID" value="AAF41804.1"/>
    <property type="molecule type" value="Genomic_DNA"/>
</dbReference>
<dbReference type="PIR" id="E81082">
    <property type="entry name" value="E81082"/>
</dbReference>
<dbReference type="RefSeq" id="NP_274456.1">
    <property type="nucleotide sequence ID" value="NC_003112.2"/>
</dbReference>
<dbReference type="RefSeq" id="WP_002219073.1">
    <property type="nucleotide sequence ID" value="NC_003112.2"/>
</dbReference>
<dbReference type="SMR" id="Q9JYT1"/>
<dbReference type="FunCoup" id="Q9JYT1">
    <property type="interactions" value="365"/>
</dbReference>
<dbReference type="STRING" id="122586.NMB1444"/>
<dbReference type="PaxDb" id="122586-NMB1444"/>
<dbReference type="KEGG" id="nme:NMB1444"/>
<dbReference type="PATRIC" id="fig|122586.8.peg.1813"/>
<dbReference type="HOGENOM" id="CLU_140930_0_0_4"/>
<dbReference type="InParanoid" id="Q9JYT1"/>
<dbReference type="OrthoDB" id="9808738at2"/>
<dbReference type="Proteomes" id="UP000000425">
    <property type="component" value="Chromosome"/>
</dbReference>
<dbReference type="GO" id="GO:0043590">
    <property type="term" value="C:bacterial nucleoid"/>
    <property type="evidence" value="ECO:0007669"/>
    <property type="project" value="UniProtKB-UniRule"/>
</dbReference>
<dbReference type="GO" id="GO:0005829">
    <property type="term" value="C:cytosol"/>
    <property type="evidence" value="ECO:0000318"/>
    <property type="project" value="GO_Central"/>
</dbReference>
<dbReference type="GO" id="GO:0003677">
    <property type="term" value="F:DNA binding"/>
    <property type="evidence" value="ECO:0000318"/>
    <property type="project" value="GO_Central"/>
</dbReference>
<dbReference type="FunFam" id="3.30.1310.10:FF:000007">
    <property type="entry name" value="Nucleoid-associated protein NMC1380"/>
    <property type="match status" value="1"/>
</dbReference>
<dbReference type="Gene3D" id="3.30.1310.10">
    <property type="entry name" value="Nucleoid-associated protein YbaB-like domain"/>
    <property type="match status" value="1"/>
</dbReference>
<dbReference type="HAMAP" id="MF_00274">
    <property type="entry name" value="DNA_YbaB_EbfC"/>
    <property type="match status" value="1"/>
</dbReference>
<dbReference type="InterPro" id="IPR036894">
    <property type="entry name" value="YbaB-like_sf"/>
</dbReference>
<dbReference type="InterPro" id="IPR004401">
    <property type="entry name" value="YbaB/EbfC"/>
</dbReference>
<dbReference type="NCBIfam" id="TIGR00103">
    <property type="entry name" value="DNA_YbaB_EbfC"/>
    <property type="match status" value="1"/>
</dbReference>
<dbReference type="PANTHER" id="PTHR33449">
    <property type="entry name" value="NUCLEOID-ASSOCIATED PROTEIN YBAB"/>
    <property type="match status" value="1"/>
</dbReference>
<dbReference type="PANTHER" id="PTHR33449:SF1">
    <property type="entry name" value="NUCLEOID-ASSOCIATED PROTEIN YBAB"/>
    <property type="match status" value="1"/>
</dbReference>
<dbReference type="Pfam" id="PF02575">
    <property type="entry name" value="YbaB_DNA_bd"/>
    <property type="match status" value="1"/>
</dbReference>
<dbReference type="PIRSF" id="PIRSF004555">
    <property type="entry name" value="UCP004555"/>
    <property type="match status" value="1"/>
</dbReference>
<dbReference type="SUPFAM" id="SSF82607">
    <property type="entry name" value="YbaB-like"/>
    <property type="match status" value="1"/>
</dbReference>
<organism>
    <name type="scientific">Neisseria meningitidis serogroup B (strain ATCC BAA-335 / MC58)</name>
    <dbReference type="NCBI Taxonomy" id="122586"/>
    <lineage>
        <taxon>Bacteria</taxon>
        <taxon>Pseudomonadati</taxon>
        <taxon>Pseudomonadota</taxon>
        <taxon>Betaproteobacteria</taxon>
        <taxon>Neisseriales</taxon>
        <taxon>Neisseriaceae</taxon>
        <taxon>Neisseria</taxon>
    </lineage>
</organism>
<feature type="chain" id="PRO_0000170415" description="Nucleoid-associated protein NMB1444">
    <location>
        <begin position="1"/>
        <end position="111"/>
    </location>
</feature>
<keyword id="KW-0963">Cytoplasm</keyword>
<keyword id="KW-0238">DNA-binding</keyword>
<keyword id="KW-1185">Reference proteome</keyword>
<gene>
    <name type="ordered locus">NMB1444</name>
</gene>
<accession>Q9JYT1</accession>
<protein>
    <recommendedName>
        <fullName evidence="1">Nucleoid-associated protein NMB1444</fullName>
    </recommendedName>
</protein>
<evidence type="ECO:0000255" key="1">
    <source>
        <dbReference type="HAMAP-Rule" id="MF_00274"/>
    </source>
</evidence>
<reference key="1">
    <citation type="journal article" date="2000" name="Science">
        <title>Complete genome sequence of Neisseria meningitidis serogroup B strain MC58.</title>
        <authorList>
            <person name="Tettelin H."/>
            <person name="Saunders N.J."/>
            <person name="Heidelberg J.F."/>
            <person name="Jeffries A.C."/>
            <person name="Nelson K.E."/>
            <person name="Eisen J.A."/>
            <person name="Ketchum K.A."/>
            <person name="Hood D.W."/>
            <person name="Peden J.F."/>
            <person name="Dodson R.J."/>
            <person name="Nelson W.C."/>
            <person name="Gwinn M.L."/>
            <person name="DeBoy R.T."/>
            <person name="Peterson J.D."/>
            <person name="Hickey E.K."/>
            <person name="Haft D.H."/>
            <person name="Salzberg S.L."/>
            <person name="White O."/>
            <person name="Fleischmann R.D."/>
            <person name="Dougherty B.A."/>
            <person name="Mason T.M."/>
            <person name="Ciecko A."/>
            <person name="Parksey D.S."/>
            <person name="Blair E."/>
            <person name="Cittone H."/>
            <person name="Clark E.B."/>
            <person name="Cotton M.D."/>
            <person name="Utterback T.R."/>
            <person name="Khouri H.M."/>
            <person name="Qin H."/>
            <person name="Vamathevan J.J."/>
            <person name="Gill J."/>
            <person name="Scarlato V."/>
            <person name="Masignani V."/>
            <person name="Pizza M."/>
            <person name="Grandi G."/>
            <person name="Sun L."/>
            <person name="Smith H.O."/>
            <person name="Fraser C.M."/>
            <person name="Moxon E.R."/>
            <person name="Rappuoli R."/>
            <person name="Venter J.C."/>
        </authorList>
    </citation>
    <scope>NUCLEOTIDE SEQUENCE [LARGE SCALE GENOMIC DNA]</scope>
    <source>
        <strain>ATCC BAA-335 / MC58</strain>
    </source>
</reference>